<sequence>MPRRRRGPRCDPSSALAVDVAAAVAAATSRTRAQKVRKAKKVLAANGHKWHRRAKTPVNKRTLVAARLLAGVRCHNRFYGALVSSFETAYCMNHRHGSDGLAATIIAEACGAVPVCSLNTTIMFEVNLGGRRPDCICVLDRAGVAGAPRESVCLIVELKTCRFSRSALTESKKNQYATGLRQLRDSAKIICDVAVPGADFVHIVPVLVFVAQRSMRIMDVRKFNERVVRANAELLRLRLAALGVYSRSFAAAPQRLQSAQDRCHDHAATPKPTPAVVPSPPAPPNPAPPQSRVGFGSALAMATAVMLGEYARENKPPR</sequence>
<evidence type="ECO:0000250" key="1"/>
<evidence type="ECO:0000256" key="2">
    <source>
        <dbReference type="SAM" id="MobiDB-lite"/>
    </source>
</evidence>
<evidence type="ECO:0000305" key="3"/>
<proteinExistence type="inferred from homology"/>
<name>UL24_PSHV1</name>
<keyword id="KW-1035">Host cytoplasm</keyword>
<keyword id="KW-1079">Host G2/M cell cycle arrest by virus</keyword>
<keyword id="KW-1040">Host Golgi apparatus</keyword>
<keyword id="KW-1048">Host nucleus</keyword>
<keyword id="KW-0945">Host-virus interaction</keyword>
<keyword id="KW-1121">Modulation of host cell cycle by virus</keyword>
<keyword id="KW-1185">Reference proteome</keyword>
<feature type="chain" id="PRO_0000406848" description="Protein UL24">
    <location>
        <begin position="1"/>
        <end position="318"/>
    </location>
</feature>
<feature type="region of interest" description="Disordered" evidence="2">
    <location>
        <begin position="258"/>
        <end position="293"/>
    </location>
</feature>
<feature type="compositionally biased region" description="Pro residues" evidence="2">
    <location>
        <begin position="271"/>
        <end position="289"/>
    </location>
</feature>
<organismHost>
    <name type="scientific">Amazona oratrix</name>
    <name type="common">yellow-headed parrot</name>
    <dbReference type="NCBI Taxonomy" id="152276"/>
</organismHost>
<dbReference type="EMBL" id="AY372243">
    <property type="protein sequence ID" value="AAQ73702.1"/>
    <property type="molecule type" value="Genomic_DNA"/>
</dbReference>
<dbReference type="RefSeq" id="NP_944396.1">
    <property type="nucleotide sequence ID" value="NC_005264.1"/>
</dbReference>
<dbReference type="GeneID" id="2656982"/>
<dbReference type="KEGG" id="vg:2656982"/>
<dbReference type="Proteomes" id="UP000006840">
    <property type="component" value="Segment"/>
</dbReference>
<dbReference type="GO" id="GO:0044177">
    <property type="term" value="C:host cell Golgi apparatus"/>
    <property type="evidence" value="ECO:0007669"/>
    <property type="project" value="UniProtKB-SubCell"/>
</dbReference>
<dbReference type="GO" id="GO:0042025">
    <property type="term" value="C:host cell nucleus"/>
    <property type="evidence" value="ECO:0007669"/>
    <property type="project" value="UniProtKB-SubCell"/>
</dbReference>
<dbReference type="GO" id="GO:0039592">
    <property type="term" value="P:symbiont-mediated arrest of host cell cycle during G2/M transition"/>
    <property type="evidence" value="ECO:0007669"/>
    <property type="project" value="UniProtKB-KW"/>
</dbReference>
<dbReference type="InterPro" id="IPR002580">
    <property type="entry name" value="Herpes_UL24"/>
</dbReference>
<dbReference type="Pfam" id="PF01646">
    <property type="entry name" value="Herpes_UL24"/>
    <property type="match status" value="1"/>
</dbReference>
<protein>
    <recommendedName>
        <fullName>Protein UL24</fullName>
    </recommendedName>
</protein>
<comment type="function">
    <text evidence="1">May play a role in the dispersal of host nucleolin from the nucleolus throughout the nucleus leading to a decrease in ribosome biogenesis.</text>
</comment>
<comment type="subcellular location">
    <subcellularLocation>
        <location>Host cytoplasm</location>
    </subcellularLocation>
    <subcellularLocation>
        <location>Host nucleus</location>
    </subcellularLocation>
    <subcellularLocation>
        <location evidence="1">Host Golgi apparatus</location>
    </subcellularLocation>
</comment>
<comment type="similarity">
    <text evidence="3">Belongs to the HHV-1 UL24 protein family.</text>
</comment>
<organism>
    <name type="scientific">Psittacid herpesvirus 1 (isolate Amazon parrot/-/97-0001/1997)</name>
    <name type="common">PsHV-1</name>
    <name type="synonym">Pacheco's disease virus</name>
    <dbReference type="NCBI Taxonomy" id="670426"/>
    <lineage>
        <taxon>Viruses</taxon>
        <taxon>Duplodnaviria</taxon>
        <taxon>Heunggongvirae</taxon>
        <taxon>Peploviricota</taxon>
        <taxon>Herviviricetes</taxon>
        <taxon>Herpesvirales</taxon>
        <taxon>Orthoherpesviridae</taxon>
        <taxon>Alphaherpesvirinae</taxon>
        <taxon>Iltovirus</taxon>
        <taxon>Iltovirus psittacidalpha1</taxon>
        <taxon>Psittacid alphaherpesvirus 1</taxon>
    </lineage>
</organism>
<reference key="1">
    <citation type="journal article" date="2006" name="J. Virol.">
        <title>Psittacid herpesvirus 1 and infectious laryngotracheitis virus: Comparative genome sequence analysis of two avian alphaherpesviruses.</title>
        <authorList>
            <person name="Thureen D.R."/>
            <person name="Keeler C.L. Jr."/>
        </authorList>
    </citation>
    <scope>NUCLEOTIDE SEQUENCE [LARGE SCALE GENOMIC DNA]</scope>
</reference>
<accession>Q6UDK8</accession>
<gene>
    <name type="primary">UL24</name>
</gene>